<protein>
    <recommendedName>
        <fullName evidence="1">Large ribosomal subunit protein bL17</fullName>
    </recommendedName>
    <alternativeName>
        <fullName evidence="2">50S ribosomal protein L17</fullName>
    </alternativeName>
</protein>
<feature type="chain" id="PRO_1000184027" description="Large ribosomal subunit protein bL17">
    <location>
        <begin position="1"/>
        <end position="126"/>
    </location>
</feature>
<accession>C1DAU4</accession>
<proteinExistence type="inferred from homology"/>
<evidence type="ECO:0000255" key="1">
    <source>
        <dbReference type="HAMAP-Rule" id="MF_01368"/>
    </source>
</evidence>
<evidence type="ECO:0000305" key="2"/>
<name>RL17_LARHH</name>
<comment type="subunit">
    <text evidence="1">Part of the 50S ribosomal subunit. Contacts protein L32.</text>
</comment>
<comment type="similarity">
    <text evidence="1">Belongs to the bacterial ribosomal protein bL17 family.</text>
</comment>
<dbReference type="EMBL" id="CP001154">
    <property type="protein sequence ID" value="ACO73275.1"/>
    <property type="molecule type" value="Genomic_DNA"/>
</dbReference>
<dbReference type="RefSeq" id="WP_012695769.1">
    <property type="nucleotide sequence ID" value="NC_012559.1"/>
</dbReference>
<dbReference type="SMR" id="C1DAU4"/>
<dbReference type="STRING" id="557598.LHK_00280"/>
<dbReference type="GeneID" id="75109481"/>
<dbReference type="KEGG" id="lhk:LHK_00280"/>
<dbReference type="eggNOG" id="COG0203">
    <property type="taxonomic scope" value="Bacteria"/>
</dbReference>
<dbReference type="HOGENOM" id="CLU_074407_2_0_4"/>
<dbReference type="Proteomes" id="UP000002010">
    <property type="component" value="Chromosome"/>
</dbReference>
<dbReference type="GO" id="GO:0022625">
    <property type="term" value="C:cytosolic large ribosomal subunit"/>
    <property type="evidence" value="ECO:0007669"/>
    <property type="project" value="TreeGrafter"/>
</dbReference>
<dbReference type="GO" id="GO:0003735">
    <property type="term" value="F:structural constituent of ribosome"/>
    <property type="evidence" value="ECO:0007669"/>
    <property type="project" value="InterPro"/>
</dbReference>
<dbReference type="GO" id="GO:0006412">
    <property type="term" value="P:translation"/>
    <property type="evidence" value="ECO:0007669"/>
    <property type="project" value="UniProtKB-UniRule"/>
</dbReference>
<dbReference type="FunFam" id="3.90.1030.10:FF:000001">
    <property type="entry name" value="50S ribosomal protein L17"/>
    <property type="match status" value="1"/>
</dbReference>
<dbReference type="Gene3D" id="3.90.1030.10">
    <property type="entry name" value="Ribosomal protein L17"/>
    <property type="match status" value="1"/>
</dbReference>
<dbReference type="HAMAP" id="MF_01368">
    <property type="entry name" value="Ribosomal_bL17"/>
    <property type="match status" value="1"/>
</dbReference>
<dbReference type="InterPro" id="IPR000456">
    <property type="entry name" value="Ribosomal_bL17"/>
</dbReference>
<dbReference type="InterPro" id="IPR047859">
    <property type="entry name" value="Ribosomal_bL17_CS"/>
</dbReference>
<dbReference type="InterPro" id="IPR036373">
    <property type="entry name" value="Ribosomal_bL17_sf"/>
</dbReference>
<dbReference type="NCBIfam" id="TIGR00059">
    <property type="entry name" value="L17"/>
    <property type="match status" value="1"/>
</dbReference>
<dbReference type="PANTHER" id="PTHR14413:SF16">
    <property type="entry name" value="LARGE RIBOSOMAL SUBUNIT PROTEIN BL17M"/>
    <property type="match status" value="1"/>
</dbReference>
<dbReference type="PANTHER" id="PTHR14413">
    <property type="entry name" value="RIBOSOMAL PROTEIN L17"/>
    <property type="match status" value="1"/>
</dbReference>
<dbReference type="Pfam" id="PF01196">
    <property type="entry name" value="Ribosomal_L17"/>
    <property type="match status" value="1"/>
</dbReference>
<dbReference type="SUPFAM" id="SSF64263">
    <property type="entry name" value="Prokaryotic ribosomal protein L17"/>
    <property type="match status" value="1"/>
</dbReference>
<dbReference type="PROSITE" id="PS01167">
    <property type="entry name" value="RIBOSOMAL_L17"/>
    <property type="match status" value="1"/>
</dbReference>
<reference key="1">
    <citation type="journal article" date="2009" name="PLoS Genet.">
        <title>The complete genome and proteome of Laribacter hongkongensis reveal potential mechanisms for adaptations to different temperatures and habitats.</title>
        <authorList>
            <person name="Woo P.C.Y."/>
            <person name="Lau S.K.P."/>
            <person name="Tse H."/>
            <person name="Teng J.L.L."/>
            <person name="Curreem S.O."/>
            <person name="Tsang A.K.L."/>
            <person name="Fan R.Y.Y."/>
            <person name="Wong G.K.M."/>
            <person name="Huang Y."/>
            <person name="Loman N.J."/>
            <person name="Snyder L.A.S."/>
            <person name="Cai J.J."/>
            <person name="Huang J.-D."/>
            <person name="Mak W."/>
            <person name="Pallen M.J."/>
            <person name="Lok S."/>
            <person name="Yuen K.-Y."/>
        </authorList>
    </citation>
    <scope>NUCLEOTIDE SEQUENCE [LARGE SCALE GENOMIC DNA]</scope>
    <source>
        <strain>HLHK9</strain>
    </source>
</reference>
<organism>
    <name type="scientific">Laribacter hongkongensis (strain HLHK9)</name>
    <dbReference type="NCBI Taxonomy" id="557598"/>
    <lineage>
        <taxon>Bacteria</taxon>
        <taxon>Pseudomonadati</taxon>
        <taxon>Pseudomonadota</taxon>
        <taxon>Betaproteobacteria</taxon>
        <taxon>Neisseriales</taxon>
        <taxon>Aquaspirillaceae</taxon>
        <taxon>Laribacter</taxon>
    </lineage>
</organism>
<gene>
    <name evidence="1" type="primary">rplQ</name>
    <name type="ordered locus">LHK_00280</name>
</gene>
<sequence length="126" mass="14523">MRHRLANRKLNRTSSHRLAMLRNLANSLLRHEQIVTTLPKAKELRRVAEPLITLGKKPSLANRRLAFDRTRDREIVVKLFDELGPRFANRNGGYLRILKYGFRQGDNAPMALVELVERPEVEAAAE</sequence>
<keyword id="KW-1185">Reference proteome</keyword>
<keyword id="KW-0687">Ribonucleoprotein</keyword>
<keyword id="KW-0689">Ribosomal protein</keyword>